<comment type="function">
    <text evidence="5">Guanine nucleotide-binding proteins (G proteins) are involved as a modulator or transducer in various transmembrane signaling systems. The beta and gamma chains are required for the GTPase activity, for replacement of GDP by GTP, and for G protein-effector interaction.</text>
</comment>
<comment type="subunit">
    <text evidence="3 5">G proteins are composed of 3 units, alpha, beta and gamma. The G protein beta1-gamma2 dimer interacts with calmodulin.</text>
</comment>
<comment type="subcellular location">
    <subcellularLocation>
        <location evidence="3">Cytoplasm</location>
    </subcellularLocation>
</comment>
<comment type="tissue specificity">
    <text evidence="3">Abundantly expressed in gills, gonad and mantle and at lower levels in digestion gland. Not detected in muscle.</text>
</comment>
<comment type="similarity">
    <text evidence="2">Belongs to the WD repeat G protein beta family.</text>
</comment>
<protein>
    <recommendedName>
        <fullName evidence="1">Guanine nucleotide-binding protein subunit beta</fullName>
        <shortName evidence="4">pfGbeta1</shortName>
    </recommendedName>
    <alternativeName>
        <fullName>G protein subunit beta-1</fullName>
    </alternativeName>
</protein>
<accession>Q5GIS3</accession>
<evidence type="ECO:0000250" key="1">
    <source>
        <dbReference type="UniProtKB" id="P23232"/>
    </source>
</evidence>
<evidence type="ECO:0000255" key="2"/>
<evidence type="ECO:0000269" key="3">
    <source>
    </source>
</evidence>
<evidence type="ECO:0000303" key="4">
    <source>
    </source>
</evidence>
<evidence type="ECO:0000305" key="5"/>
<evidence type="ECO:0000312" key="6">
    <source>
        <dbReference type="EMBL" id="AAS90835.1"/>
    </source>
</evidence>
<proteinExistence type="evidence at protein level"/>
<sequence>MSSELEALRQETEQLKNQIREARKAAADTTLNQAAVNVEQVGRIQMRTRRTLRGHLAKIYAMHWASDSRNLVSASQDGKLIVWDGYTTNKVHAIPLRSSWVMTCAYAPSGSYVACGGLDNICSIYSLKTREGNVRVSRELPGHTGYLSCCRFLDDNQIVTSSGDMSCALWDIETGQQTTAFTGHTGDVMSLSLSPDMRTFVSGACDASAKLWDIRDGMCKQTFSGHESDINAITYFPNGYAFATGSDDATCRLFDIRADQEIGMYSHDNIICGITSVAFSKSGRLLLGGYDDFNCNVWDVLRQERAGVLAGHDNRVSCLGVTEDGMAVATGSWDSFLRIWN</sequence>
<reference evidence="5 6" key="1">
    <citation type="journal article" date="2005" name="Comp. Biochem. Physiol.">
        <title>Cloning and characterization of a novel G protein beta-subunit of pearl oyster (Pinctada fucata), and its interaction sites with calmodulin.</title>
        <authorList>
            <person name="Chen L."/>
            <person name="Xie L."/>
            <person name="Xiong X."/>
            <person name="Dai Y."/>
            <person name="Fan W."/>
            <person name="Zhang R."/>
        </authorList>
    </citation>
    <scope>NUCLEOTIDE SEQUENCE [MRNA]</scope>
    <scope>SUBUNIT</scope>
    <scope>SUBCELLULAR LOCATION</scope>
    <scope>TISSUE SPECIFICITY</scope>
    <scope>MUTAGENESIS OF 49-ARG-ARG-50 AND 49-ARG--LEU-52</scope>
    <source>
        <tissue evidence="3">Mantle</tissue>
    </source>
</reference>
<name>GBB_PINFU</name>
<feature type="chain" id="PRO_0000407915" description="Guanine nucleotide-binding protein subunit beta">
    <location>
        <begin position="1"/>
        <end position="341"/>
    </location>
</feature>
<feature type="repeat" description="WD 1" evidence="2">
    <location>
        <begin position="54"/>
        <end position="93"/>
    </location>
</feature>
<feature type="repeat" description="WD 2" evidence="2">
    <location>
        <begin position="96"/>
        <end position="135"/>
    </location>
</feature>
<feature type="repeat" description="WD 3" evidence="2">
    <location>
        <begin position="142"/>
        <end position="180"/>
    </location>
</feature>
<feature type="repeat" description="WD 4" evidence="2">
    <location>
        <begin position="183"/>
        <end position="222"/>
    </location>
</feature>
<feature type="repeat" description="WD 5" evidence="2">
    <location>
        <begin position="225"/>
        <end position="264"/>
    </location>
</feature>
<feature type="repeat" description="WD 6" evidence="2">
    <location>
        <begin position="269"/>
        <end position="308"/>
    </location>
</feature>
<feature type="repeat" description="WD 7" evidence="2">
    <location>
        <begin position="311"/>
        <end position="341"/>
    </location>
</feature>
<feature type="mutagenesis site" description="Greatly reduces beta1-gamma2 binding affinity for calmodulin." evidence="3">
    <location>
        <begin position="49"/>
        <end position="52"/>
    </location>
</feature>
<feature type="mutagenesis site" description="Greatly reduces beta1-gamma2 binding affinity for calmodulin." evidence="3">
    <original>RR</original>
    <variation>AA</variation>
    <location>
        <begin position="49"/>
        <end position="50"/>
    </location>
</feature>
<keyword id="KW-0112">Calmodulin-binding</keyword>
<keyword id="KW-0963">Cytoplasm</keyword>
<keyword id="KW-0677">Repeat</keyword>
<keyword id="KW-0807">Transducer</keyword>
<keyword id="KW-0853">WD repeat</keyword>
<organism>
    <name type="scientific">Pinctada fucata</name>
    <name type="common">Akoya pearl oyster</name>
    <name type="synonym">Pinctada imbricata fucata</name>
    <dbReference type="NCBI Taxonomy" id="50426"/>
    <lineage>
        <taxon>Eukaryota</taxon>
        <taxon>Metazoa</taxon>
        <taxon>Spiralia</taxon>
        <taxon>Lophotrochozoa</taxon>
        <taxon>Mollusca</taxon>
        <taxon>Bivalvia</taxon>
        <taxon>Autobranchia</taxon>
        <taxon>Pteriomorphia</taxon>
        <taxon>Pterioida</taxon>
        <taxon>Pterioidea</taxon>
        <taxon>Pteriidae</taxon>
        <taxon>Pinctada</taxon>
    </lineage>
</organism>
<dbReference type="EMBL" id="AY524667">
    <property type="protein sequence ID" value="AAS90835.1"/>
    <property type="molecule type" value="mRNA"/>
</dbReference>
<dbReference type="SMR" id="Q5GIS3"/>
<dbReference type="GO" id="GO:0005737">
    <property type="term" value="C:cytoplasm"/>
    <property type="evidence" value="ECO:0007669"/>
    <property type="project" value="UniProtKB-SubCell"/>
</dbReference>
<dbReference type="GO" id="GO:0005516">
    <property type="term" value="F:calmodulin binding"/>
    <property type="evidence" value="ECO:0007669"/>
    <property type="project" value="UniProtKB-KW"/>
</dbReference>
<dbReference type="GO" id="GO:0007165">
    <property type="term" value="P:signal transduction"/>
    <property type="evidence" value="ECO:0007669"/>
    <property type="project" value="UniProtKB-KW"/>
</dbReference>
<dbReference type="CDD" id="cd00200">
    <property type="entry name" value="WD40"/>
    <property type="match status" value="1"/>
</dbReference>
<dbReference type="FunFam" id="2.130.10.10:FF:000007">
    <property type="entry name" value="Guanine nucleotide-binding protein G(I)/G(S)/G(T) subunit beta-1"/>
    <property type="match status" value="1"/>
</dbReference>
<dbReference type="Gene3D" id="2.130.10.10">
    <property type="entry name" value="YVTN repeat-like/Quinoprotein amine dehydrogenase"/>
    <property type="match status" value="1"/>
</dbReference>
<dbReference type="InterPro" id="IPR020472">
    <property type="entry name" value="G-protein_beta_WD-40_rep"/>
</dbReference>
<dbReference type="InterPro" id="IPR001632">
    <property type="entry name" value="Gprotein_B"/>
</dbReference>
<dbReference type="InterPro" id="IPR016346">
    <property type="entry name" value="Guanine_nucleotide-bd_bsu"/>
</dbReference>
<dbReference type="InterPro" id="IPR015943">
    <property type="entry name" value="WD40/YVTN_repeat-like_dom_sf"/>
</dbReference>
<dbReference type="InterPro" id="IPR019775">
    <property type="entry name" value="WD40_repeat_CS"/>
</dbReference>
<dbReference type="InterPro" id="IPR036322">
    <property type="entry name" value="WD40_repeat_dom_sf"/>
</dbReference>
<dbReference type="InterPro" id="IPR001680">
    <property type="entry name" value="WD40_rpt"/>
</dbReference>
<dbReference type="PANTHER" id="PTHR19850">
    <property type="entry name" value="GUANINE NUCLEOTIDE-BINDING PROTEIN BETA G PROTEIN BETA"/>
    <property type="match status" value="1"/>
</dbReference>
<dbReference type="Pfam" id="PF25391">
    <property type="entry name" value="WD40_Gbeta"/>
    <property type="match status" value="1"/>
</dbReference>
<dbReference type="PIRSF" id="PIRSF002394">
    <property type="entry name" value="GN-bd_beta"/>
    <property type="match status" value="1"/>
</dbReference>
<dbReference type="PRINTS" id="PR00319">
    <property type="entry name" value="GPROTEINB"/>
</dbReference>
<dbReference type="PRINTS" id="PR00320">
    <property type="entry name" value="GPROTEINBRPT"/>
</dbReference>
<dbReference type="SMART" id="SM00320">
    <property type="entry name" value="WD40"/>
    <property type="match status" value="7"/>
</dbReference>
<dbReference type="SUPFAM" id="SSF50978">
    <property type="entry name" value="WD40 repeat-like"/>
    <property type="match status" value="1"/>
</dbReference>
<dbReference type="PROSITE" id="PS00678">
    <property type="entry name" value="WD_REPEATS_1"/>
    <property type="match status" value="3"/>
</dbReference>
<dbReference type="PROSITE" id="PS50082">
    <property type="entry name" value="WD_REPEATS_2"/>
    <property type="match status" value="5"/>
</dbReference>
<dbReference type="PROSITE" id="PS50294">
    <property type="entry name" value="WD_REPEATS_REGION"/>
    <property type="match status" value="1"/>
</dbReference>